<protein>
    <recommendedName>
        <fullName evidence="1">Large ribosomal subunit protein uL18</fullName>
    </recommendedName>
    <alternativeName>
        <fullName evidence="2">50S ribosomal protein L18</fullName>
    </alternativeName>
</protein>
<reference key="1">
    <citation type="submission" date="2007-02" db="EMBL/GenBank/DDBJ databases">
        <title>Complete sequence of Clostridium thermocellum ATCC 27405.</title>
        <authorList>
            <consortium name="US DOE Joint Genome Institute"/>
            <person name="Copeland A."/>
            <person name="Lucas S."/>
            <person name="Lapidus A."/>
            <person name="Barry K."/>
            <person name="Detter J.C."/>
            <person name="Glavina del Rio T."/>
            <person name="Hammon N."/>
            <person name="Israni S."/>
            <person name="Dalin E."/>
            <person name="Tice H."/>
            <person name="Pitluck S."/>
            <person name="Chertkov O."/>
            <person name="Brettin T."/>
            <person name="Bruce D."/>
            <person name="Han C."/>
            <person name="Tapia R."/>
            <person name="Gilna P."/>
            <person name="Schmutz J."/>
            <person name="Larimer F."/>
            <person name="Land M."/>
            <person name="Hauser L."/>
            <person name="Kyrpides N."/>
            <person name="Mikhailova N."/>
            <person name="Wu J.H.D."/>
            <person name="Newcomb M."/>
            <person name="Richardson P."/>
        </authorList>
    </citation>
    <scope>NUCLEOTIDE SEQUENCE [LARGE SCALE GENOMIC DNA]</scope>
    <source>
        <strain>ATCC 27405 / DSM 1237 / JCM 9322 / NBRC 103400 / NCIMB 10682 / NRRL B-4536 / VPI 7372</strain>
    </source>
</reference>
<evidence type="ECO:0000255" key="1">
    <source>
        <dbReference type="HAMAP-Rule" id="MF_01337"/>
    </source>
</evidence>
<evidence type="ECO:0000305" key="2"/>
<proteinExistence type="inferred from homology"/>
<gene>
    <name evidence="1" type="primary">rplR</name>
    <name type="ordered locus">Cthe_2919</name>
</gene>
<sequence>MIKKPTSNVARLRKHKRVRKKVFGTPERPRLNVYRSLTNIYAQVIDDTVGRTLVSASSLEKEIKSKLGYCGNKQAAREVGKLVAQRALANGIKRVVFDRGGYIYHGRVKELAEGAREAGLEF</sequence>
<name>RL18_ACET2</name>
<dbReference type="EMBL" id="CP000568">
    <property type="protein sequence ID" value="ABN54117.1"/>
    <property type="molecule type" value="Genomic_DNA"/>
</dbReference>
<dbReference type="RefSeq" id="WP_003514654.1">
    <property type="nucleotide sequence ID" value="NC_009012.1"/>
</dbReference>
<dbReference type="SMR" id="A3DJI8"/>
<dbReference type="STRING" id="203119.Cthe_2919"/>
<dbReference type="GeneID" id="35804267"/>
<dbReference type="KEGG" id="cth:Cthe_2919"/>
<dbReference type="eggNOG" id="COG0256">
    <property type="taxonomic scope" value="Bacteria"/>
</dbReference>
<dbReference type="HOGENOM" id="CLU_098841_0_1_9"/>
<dbReference type="OrthoDB" id="9810939at2"/>
<dbReference type="Proteomes" id="UP000002145">
    <property type="component" value="Chromosome"/>
</dbReference>
<dbReference type="GO" id="GO:0022625">
    <property type="term" value="C:cytosolic large ribosomal subunit"/>
    <property type="evidence" value="ECO:0007669"/>
    <property type="project" value="TreeGrafter"/>
</dbReference>
<dbReference type="GO" id="GO:0008097">
    <property type="term" value="F:5S rRNA binding"/>
    <property type="evidence" value="ECO:0007669"/>
    <property type="project" value="TreeGrafter"/>
</dbReference>
<dbReference type="GO" id="GO:0003735">
    <property type="term" value="F:structural constituent of ribosome"/>
    <property type="evidence" value="ECO:0007669"/>
    <property type="project" value="InterPro"/>
</dbReference>
<dbReference type="GO" id="GO:0006412">
    <property type="term" value="P:translation"/>
    <property type="evidence" value="ECO:0007669"/>
    <property type="project" value="UniProtKB-UniRule"/>
</dbReference>
<dbReference type="CDD" id="cd00432">
    <property type="entry name" value="Ribosomal_L18_L5e"/>
    <property type="match status" value="1"/>
</dbReference>
<dbReference type="FunFam" id="3.30.420.100:FF:000001">
    <property type="entry name" value="50S ribosomal protein L18"/>
    <property type="match status" value="1"/>
</dbReference>
<dbReference type="Gene3D" id="3.30.420.100">
    <property type="match status" value="1"/>
</dbReference>
<dbReference type="HAMAP" id="MF_01337_B">
    <property type="entry name" value="Ribosomal_uL18_B"/>
    <property type="match status" value="1"/>
</dbReference>
<dbReference type="InterPro" id="IPR004389">
    <property type="entry name" value="Ribosomal_uL18_bac-type"/>
</dbReference>
<dbReference type="InterPro" id="IPR005484">
    <property type="entry name" value="Ribosomal_uL18_bac/euk"/>
</dbReference>
<dbReference type="NCBIfam" id="TIGR00060">
    <property type="entry name" value="L18_bact"/>
    <property type="match status" value="1"/>
</dbReference>
<dbReference type="PANTHER" id="PTHR12899">
    <property type="entry name" value="39S RIBOSOMAL PROTEIN L18, MITOCHONDRIAL"/>
    <property type="match status" value="1"/>
</dbReference>
<dbReference type="PANTHER" id="PTHR12899:SF3">
    <property type="entry name" value="LARGE RIBOSOMAL SUBUNIT PROTEIN UL18M"/>
    <property type="match status" value="1"/>
</dbReference>
<dbReference type="Pfam" id="PF00861">
    <property type="entry name" value="Ribosomal_L18p"/>
    <property type="match status" value="1"/>
</dbReference>
<dbReference type="SUPFAM" id="SSF53137">
    <property type="entry name" value="Translational machinery components"/>
    <property type="match status" value="1"/>
</dbReference>
<accession>A3DJI8</accession>
<feature type="chain" id="PRO_1000053019" description="Large ribosomal subunit protein uL18">
    <location>
        <begin position="1"/>
        <end position="122"/>
    </location>
</feature>
<keyword id="KW-1185">Reference proteome</keyword>
<keyword id="KW-0687">Ribonucleoprotein</keyword>
<keyword id="KW-0689">Ribosomal protein</keyword>
<keyword id="KW-0694">RNA-binding</keyword>
<keyword id="KW-0699">rRNA-binding</keyword>
<organism>
    <name type="scientific">Acetivibrio thermocellus (strain ATCC 27405 / DSM 1237 / JCM 9322 / NBRC 103400 / NCIMB 10682 / NRRL B-4536 / VPI 7372)</name>
    <name type="common">Clostridium thermocellum</name>
    <dbReference type="NCBI Taxonomy" id="203119"/>
    <lineage>
        <taxon>Bacteria</taxon>
        <taxon>Bacillati</taxon>
        <taxon>Bacillota</taxon>
        <taxon>Clostridia</taxon>
        <taxon>Eubacteriales</taxon>
        <taxon>Oscillospiraceae</taxon>
        <taxon>Acetivibrio</taxon>
    </lineage>
</organism>
<comment type="function">
    <text evidence="1">This is one of the proteins that bind and probably mediate the attachment of the 5S RNA into the large ribosomal subunit, where it forms part of the central protuberance.</text>
</comment>
<comment type="subunit">
    <text evidence="1">Part of the 50S ribosomal subunit; part of the 5S rRNA/L5/L18/L25 subcomplex. Contacts the 5S and 23S rRNAs.</text>
</comment>
<comment type="similarity">
    <text evidence="1">Belongs to the universal ribosomal protein uL18 family.</text>
</comment>